<proteinExistence type="inferred from homology"/>
<name>SYP_BURCM</name>
<feature type="chain" id="PRO_0000288316" description="Proline--tRNA ligase">
    <location>
        <begin position="1"/>
        <end position="578"/>
    </location>
</feature>
<keyword id="KW-0030">Aminoacyl-tRNA synthetase</keyword>
<keyword id="KW-0067">ATP-binding</keyword>
<keyword id="KW-0963">Cytoplasm</keyword>
<keyword id="KW-0436">Ligase</keyword>
<keyword id="KW-0547">Nucleotide-binding</keyword>
<keyword id="KW-0648">Protein biosynthesis</keyword>
<dbReference type="EC" id="6.1.1.15" evidence="1"/>
<dbReference type="EMBL" id="CP000440">
    <property type="protein sequence ID" value="ABI86049.1"/>
    <property type="molecule type" value="Genomic_DNA"/>
</dbReference>
<dbReference type="RefSeq" id="WP_011655909.1">
    <property type="nucleotide sequence ID" value="NC_008390.1"/>
</dbReference>
<dbReference type="SMR" id="Q0BIH4"/>
<dbReference type="GeneID" id="93084092"/>
<dbReference type="KEGG" id="bam:Bamb_0490"/>
<dbReference type="PATRIC" id="fig|339670.21.peg.1115"/>
<dbReference type="eggNOG" id="COG0442">
    <property type="taxonomic scope" value="Bacteria"/>
</dbReference>
<dbReference type="Proteomes" id="UP000000662">
    <property type="component" value="Chromosome 1"/>
</dbReference>
<dbReference type="GO" id="GO:0005829">
    <property type="term" value="C:cytosol"/>
    <property type="evidence" value="ECO:0007669"/>
    <property type="project" value="TreeGrafter"/>
</dbReference>
<dbReference type="GO" id="GO:0002161">
    <property type="term" value="F:aminoacyl-tRNA deacylase activity"/>
    <property type="evidence" value="ECO:0007669"/>
    <property type="project" value="InterPro"/>
</dbReference>
<dbReference type="GO" id="GO:0005524">
    <property type="term" value="F:ATP binding"/>
    <property type="evidence" value="ECO:0007669"/>
    <property type="project" value="UniProtKB-UniRule"/>
</dbReference>
<dbReference type="GO" id="GO:0004827">
    <property type="term" value="F:proline-tRNA ligase activity"/>
    <property type="evidence" value="ECO:0007669"/>
    <property type="project" value="UniProtKB-UniRule"/>
</dbReference>
<dbReference type="GO" id="GO:0006433">
    <property type="term" value="P:prolyl-tRNA aminoacylation"/>
    <property type="evidence" value="ECO:0007669"/>
    <property type="project" value="UniProtKB-UniRule"/>
</dbReference>
<dbReference type="CDD" id="cd04334">
    <property type="entry name" value="ProRS-INS"/>
    <property type="match status" value="1"/>
</dbReference>
<dbReference type="CDD" id="cd00861">
    <property type="entry name" value="ProRS_anticodon_short"/>
    <property type="match status" value="1"/>
</dbReference>
<dbReference type="CDD" id="cd00779">
    <property type="entry name" value="ProRS_core_prok"/>
    <property type="match status" value="1"/>
</dbReference>
<dbReference type="FunFam" id="3.30.930.10:FF:000043">
    <property type="entry name" value="Proline--tRNA ligase"/>
    <property type="match status" value="1"/>
</dbReference>
<dbReference type="FunFam" id="3.30.930.10:FF:000097">
    <property type="entry name" value="Proline--tRNA ligase"/>
    <property type="match status" value="1"/>
</dbReference>
<dbReference type="Gene3D" id="3.40.50.800">
    <property type="entry name" value="Anticodon-binding domain"/>
    <property type="match status" value="1"/>
</dbReference>
<dbReference type="Gene3D" id="3.30.930.10">
    <property type="entry name" value="Bira Bifunctional Protein, Domain 2"/>
    <property type="match status" value="2"/>
</dbReference>
<dbReference type="Gene3D" id="3.90.960.10">
    <property type="entry name" value="YbaK/aminoacyl-tRNA synthetase-associated domain"/>
    <property type="match status" value="1"/>
</dbReference>
<dbReference type="HAMAP" id="MF_01569">
    <property type="entry name" value="Pro_tRNA_synth_type1"/>
    <property type="match status" value="1"/>
</dbReference>
<dbReference type="InterPro" id="IPR002314">
    <property type="entry name" value="aa-tRNA-synt_IIb"/>
</dbReference>
<dbReference type="InterPro" id="IPR006195">
    <property type="entry name" value="aa-tRNA-synth_II"/>
</dbReference>
<dbReference type="InterPro" id="IPR045864">
    <property type="entry name" value="aa-tRNA-synth_II/BPL/LPL"/>
</dbReference>
<dbReference type="InterPro" id="IPR004154">
    <property type="entry name" value="Anticodon-bd"/>
</dbReference>
<dbReference type="InterPro" id="IPR036621">
    <property type="entry name" value="Anticodon-bd_dom_sf"/>
</dbReference>
<dbReference type="InterPro" id="IPR002316">
    <property type="entry name" value="Pro-tRNA-ligase_IIa"/>
</dbReference>
<dbReference type="InterPro" id="IPR004500">
    <property type="entry name" value="Pro-tRNA-synth_IIa_bac-type"/>
</dbReference>
<dbReference type="InterPro" id="IPR023717">
    <property type="entry name" value="Pro-tRNA-Synthase_IIa_type1"/>
</dbReference>
<dbReference type="InterPro" id="IPR050062">
    <property type="entry name" value="Pro-tRNA_synthetase"/>
</dbReference>
<dbReference type="InterPro" id="IPR044140">
    <property type="entry name" value="ProRS_anticodon_short"/>
</dbReference>
<dbReference type="InterPro" id="IPR033730">
    <property type="entry name" value="ProRS_core_prok"/>
</dbReference>
<dbReference type="InterPro" id="IPR036754">
    <property type="entry name" value="YbaK/aa-tRNA-synt-asso_dom_sf"/>
</dbReference>
<dbReference type="InterPro" id="IPR007214">
    <property type="entry name" value="YbaK/aa-tRNA-synth-assoc-dom"/>
</dbReference>
<dbReference type="NCBIfam" id="NF006625">
    <property type="entry name" value="PRK09194.1"/>
    <property type="match status" value="1"/>
</dbReference>
<dbReference type="NCBIfam" id="TIGR00409">
    <property type="entry name" value="proS_fam_II"/>
    <property type="match status" value="1"/>
</dbReference>
<dbReference type="PANTHER" id="PTHR42753">
    <property type="entry name" value="MITOCHONDRIAL RIBOSOME PROTEIN L39/PROLYL-TRNA LIGASE FAMILY MEMBER"/>
    <property type="match status" value="1"/>
</dbReference>
<dbReference type="PANTHER" id="PTHR42753:SF2">
    <property type="entry name" value="PROLINE--TRNA LIGASE"/>
    <property type="match status" value="1"/>
</dbReference>
<dbReference type="Pfam" id="PF03129">
    <property type="entry name" value="HGTP_anticodon"/>
    <property type="match status" value="1"/>
</dbReference>
<dbReference type="Pfam" id="PF00587">
    <property type="entry name" value="tRNA-synt_2b"/>
    <property type="match status" value="1"/>
</dbReference>
<dbReference type="Pfam" id="PF04073">
    <property type="entry name" value="tRNA_edit"/>
    <property type="match status" value="1"/>
</dbReference>
<dbReference type="PIRSF" id="PIRSF001535">
    <property type="entry name" value="ProRS_1"/>
    <property type="match status" value="1"/>
</dbReference>
<dbReference type="PRINTS" id="PR01046">
    <property type="entry name" value="TRNASYNTHPRO"/>
</dbReference>
<dbReference type="SUPFAM" id="SSF52954">
    <property type="entry name" value="Class II aaRS ABD-related"/>
    <property type="match status" value="1"/>
</dbReference>
<dbReference type="SUPFAM" id="SSF55681">
    <property type="entry name" value="Class II aaRS and biotin synthetases"/>
    <property type="match status" value="1"/>
</dbReference>
<dbReference type="SUPFAM" id="SSF55826">
    <property type="entry name" value="YbaK/ProRS associated domain"/>
    <property type="match status" value="1"/>
</dbReference>
<dbReference type="PROSITE" id="PS50862">
    <property type="entry name" value="AA_TRNA_LIGASE_II"/>
    <property type="match status" value="1"/>
</dbReference>
<organism>
    <name type="scientific">Burkholderia ambifaria (strain ATCC BAA-244 / DSM 16087 / CCUG 44356 / LMG 19182 / AMMD)</name>
    <name type="common">Burkholderia cepacia (strain AMMD)</name>
    <dbReference type="NCBI Taxonomy" id="339670"/>
    <lineage>
        <taxon>Bacteria</taxon>
        <taxon>Pseudomonadati</taxon>
        <taxon>Pseudomonadota</taxon>
        <taxon>Betaproteobacteria</taxon>
        <taxon>Burkholderiales</taxon>
        <taxon>Burkholderiaceae</taxon>
        <taxon>Burkholderia</taxon>
        <taxon>Burkholderia cepacia complex</taxon>
    </lineage>
</organism>
<comment type="function">
    <text evidence="1">Catalyzes the attachment of proline to tRNA(Pro) in a two-step reaction: proline is first activated by ATP to form Pro-AMP and then transferred to the acceptor end of tRNA(Pro). As ProRS can inadvertently accommodate and process non-cognate amino acids such as alanine and cysteine, to avoid such errors it has two additional distinct editing activities against alanine. One activity is designated as 'pretransfer' editing and involves the tRNA(Pro)-independent hydrolysis of activated Ala-AMP. The other activity is designated 'posttransfer' editing and involves deacylation of mischarged Ala-tRNA(Pro). The misacylated Cys-tRNA(Pro) is not edited by ProRS.</text>
</comment>
<comment type="catalytic activity">
    <reaction evidence="1">
        <text>tRNA(Pro) + L-proline + ATP = L-prolyl-tRNA(Pro) + AMP + diphosphate</text>
        <dbReference type="Rhea" id="RHEA:14305"/>
        <dbReference type="Rhea" id="RHEA-COMP:9700"/>
        <dbReference type="Rhea" id="RHEA-COMP:9702"/>
        <dbReference type="ChEBI" id="CHEBI:30616"/>
        <dbReference type="ChEBI" id="CHEBI:33019"/>
        <dbReference type="ChEBI" id="CHEBI:60039"/>
        <dbReference type="ChEBI" id="CHEBI:78442"/>
        <dbReference type="ChEBI" id="CHEBI:78532"/>
        <dbReference type="ChEBI" id="CHEBI:456215"/>
        <dbReference type="EC" id="6.1.1.15"/>
    </reaction>
</comment>
<comment type="subunit">
    <text evidence="1">Homodimer.</text>
</comment>
<comment type="subcellular location">
    <subcellularLocation>
        <location evidence="1">Cytoplasm</location>
    </subcellularLocation>
</comment>
<comment type="domain">
    <text evidence="1">Consists of three domains: the N-terminal catalytic domain, the editing domain and the C-terminal anticodon-binding domain.</text>
</comment>
<comment type="similarity">
    <text evidence="1">Belongs to the class-II aminoacyl-tRNA synthetase family. ProS type 1 subfamily.</text>
</comment>
<protein>
    <recommendedName>
        <fullName evidence="1">Proline--tRNA ligase</fullName>
        <ecNumber evidence="1">6.1.1.15</ecNumber>
    </recommendedName>
    <alternativeName>
        <fullName evidence="1">Prolyl-tRNA synthetase</fullName>
        <shortName evidence="1">ProRS</shortName>
    </alternativeName>
</protein>
<accession>Q0BIH4</accession>
<reference key="1">
    <citation type="submission" date="2006-08" db="EMBL/GenBank/DDBJ databases">
        <title>Complete sequence of chromosome 1 of Burkholderia cepacia AMMD.</title>
        <authorList>
            <person name="Copeland A."/>
            <person name="Lucas S."/>
            <person name="Lapidus A."/>
            <person name="Barry K."/>
            <person name="Detter J.C."/>
            <person name="Glavina del Rio T."/>
            <person name="Hammon N."/>
            <person name="Israni S."/>
            <person name="Pitluck S."/>
            <person name="Bruce D."/>
            <person name="Chain P."/>
            <person name="Malfatti S."/>
            <person name="Shin M."/>
            <person name="Vergez L."/>
            <person name="Schmutz J."/>
            <person name="Larimer F."/>
            <person name="Land M."/>
            <person name="Hauser L."/>
            <person name="Kyrpides N."/>
            <person name="Kim E."/>
            <person name="Parke J."/>
            <person name="Coenye T."/>
            <person name="Konstantinidis K."/>
            <person name="Ramette A."/>
            <person name="Tiedje J."/>
            <person name="Richardson P."/>
        </authorList>
    </citation>
    <scope>NUCLEOTIDE SEQUENCE [LARGE SCALE GENOMIC DNA]</scope>
    <source>
        <strain>ATCC BAA-244 / DSM 16087 / CCUG 44356 / LMG 19182 / AMMD</strain>
    </source>
</reference>
<sequence>MKASRFFIGTLKEAPADAEIVSHKLMVRAGMIRRVAGGIYNYLPVGLRSIRKVEAIVREEMNRAGAIELLMPAVQPAELWQESGRWEQYGPELLRFKDRKDNDFVIGPTHEEVVTDIARNQIKSYRQMPVNFYQIQTKFRDEIRPRFGVMRGREFLMKDAYSFDKDTAGLNESYRKMYDAYVRIFTRLGLEFRAVAADSGSIGGNFSHEFHVIADTGEDAIAYCPTSDFAANIEAAEALPLIAERAAPAEAMEKVATPGKAKCEAVAELLAIPLERTIKSIVLATENEGAEPTIWLIMLRGDHDLNEIKVSKLPGLKNHRFATEQEIVDWFGTPPGYLGPVGTKKPVKVIADRTVANMSDFVVGANEVDYHIAGVNWGRDLPEPEVADVRDVKKGDPSPDGKGTIDICRGIEVGHVFQLGTKYSDAMGATFLDESGKPQPMLMGCYGVGITRILGAAIEQNFDDKGIIWPESIAPFEVVLCPMGYDRSDMVREAADKLYAELAAAGIDVILDDRGERPGVMFADWELIGVPHRLVIGERGLKEGKIEYQGRRDAEATLLPADEAAATVTEKIRAALAH</sequence>
<gene>
    <name evidence="1" type="primary">proS</name>
    <name type="ordered locus">Bamb_0490</name>
</gene>
<evidence type="ECO:0000255" key="1">
    <source>
        <dbReference type="HAMAP-Rule" id="MF_01569"/>
    </source>
</evidence>